<gene>
    <name evidence="1" type="primary">rlmN</name>
    <name type="ordered locus">TT_C1574</name>
</gene>
<protein>
    <recommendedName>
        <fullName evidence="1">Probable dual-specificity RNA methyltransferase RlmN</fullName>
        <ecNumber evidence="1">2.1.1.192</ecNumber>
    </recommendedName>
    <alternativeName>
        <fullName evidence="1">23S rRNA (adenine(2503)-C(2))-methyltransferase</fullName>
    </alternativeName>
    <alternativeName>
        <fullName evidence="1">23S rRNA m2A2503 methyltransferase</fullName>
    </alternativeName>
    <alternativeName>
        <fullName evidence="1">Ribosomal RNA large subunit methyltransferase N</fullName>
    </alternativeName>
    <alternativeName>
        <fullName evidence="1">tRNA (adenine(37)-C(2))-methyltransferase</fullName>
    </alternativeName>
    <alternativeName>
        <fullName evidence="1">tRNA m2A37 methyltransferase</fullName>
    </alternativeName>
</protein>
<comment type="function">
    <text evidence="1">Specifically methylates position 2 of adenine 2503 in 23S rRNA and position 2 of adenine 37 in tRNAs.</text>
</comment>
<comment type="catalytic activity">
    <reaction evidence="1">
        <text>adenosine(2503) in 23S rRNA + 2 reduced [2Fe-2S]-[ferredoxin] + 2 S-adenosyl-L-methionine = 2-methyladenosine(2503) in 23S rRNA + 5'-deoxyadenosine + L-methionine + 2 oxidized [2Fe-2S]-[ferredoxin] + S-adenosyl-L-homocysteine</text>
        <dbReference type="Rhea" id="RHEA:42916"/>
        <dbReference type="Rhea" id="RHEA-COMP:10000"/>
        <dbReference type="Rhea" id="RHEA-COMP:10001"/>
        <dbReference type="Rhea" id="RHEA-COMP:10152"/>
        <dbReference type="Rhea" id="RHEA-COMP:10282"/>
        <dbReference type="ChEBI" id="CHEBI:17319"/>
        <dbReference type="ChEBI" id="CHEBI:33737"/>
        <dbReference type="ChEBI" id="CHEBI:33738"/>
        <dbReference type="ChEBI" id="CHEBI:57844"/>
        <dbReference type="ChEBI" id="CHEBI:57856"/>
        <dbReference type="ChEBI" id="CHEBI:59789"/>
        <dbReference type="ChEBI" id="CHEBI:74411"/>
        <dbReference type="ChEBI" id="CHEBI:74497"/>
        <dbReference type="EC" id="2.1.1.192"/>
    </reaction>
</comment>
<comment type="catalytic activity">
    <reaction evidence="1">
        <text>adenosine(37) in tRNA + 2 reduced [2Fe-2S]-[ferredoxin] + 2 S-adenosyl-L-methionine = 2-methyladenosine(37) in tRNA + 5'-deoxyadenosine + L-methionine + 2 oxidized [2Fe-2S]-[ferredoxin] + S-adenosyl-L-homocysteine</text>
        <dbReference type="Rhea" id="RHEA:43332"/>
        <dbReference type="Rhea" id="RHEA-COMP:10000"/>
        <dbReference type="Rhea" id="RHEA-COMP:10001"/>
        <dbReference type="Rhea" id="RHEA-COMP:10162"/>
        <dbReference type="Rhea" id="RHEA-COMP:10485"/>
        <dbReference type="ChEBI" id="CHEBI:17319"/>
        <dbReference type="ChEBI" id="CHEBI:33737"/>
        <dbReference type="ChEBI" id="CHEBI:33738"/>
        <dbReference type="ChEBI" id="CHEBI:57844"/>
        <dbReference type="ChEBI" id="CHEBI:57856"/>
        <dbReference type="ChEBI" id="CHEBI:59789"/>
        <dbReference type="ChEBI" id="CHEBI:74411"/>
        <dbReference type="ChEBI" id="CHEBI:74497"/>
        <dbReference type="EC" id="2.1.1.192"/>
    </reaction>
</comment>
<comment type="cofactor">
    <cofactor evidence="1">
        <name>[4Fe-4S] cluster</name>
        <dbReference type="ChEBI" id="CHEBI:49883"/>
    </cofactor>
    <text evidence="1">Binds 1 [4Fe-4S] cluster. The cluster is coordinated with 3 cysteines and an exchangeable S-adenosyl-L-methionine.</text>
</comment>
<comment type="subcellular location">
    <subcellularLocation>
        <location evidence="1">Cytoplasm</location>
    </subcellularLocation>
</comment>
<comment type="miscellaneous">
    <text evidence="1">Reaction proceeds by a ping-pong mechanism involving intermediate methylation of a conserved cysteine residue.</text>
</comment>
<comment type="similarity">
    <text evidence="1">Belongs to the radical SAM superfamily. RlmN family.</text>
</comment>
<accession>Q72HC1</accession>
<feature type="chain" id="PRO_0000350503" description="Probable dual-specificity RNA methyltransferase RlmN">
    <location>
        <begin position="1"/>
        <end position="355"/>
    </location>
</feature>
<feature type="domain" description="Radical SAM core" evidence="2">
    <location>
        <begin position="95"/>
        <end position="322"/>
    </location>
</feature>
<feature type="active site" description="Proton acceptor" evidence="1">
    <location>
        <position position="89"/>
    </location>
</feature>
<feature type="active site" description="S-methylcysteine intermediate" evidence="1">
    <location>
        <position position="333"/>
    </location>
</feature>
<feature type="binding site" evidence="1">
    <location>
        <position position="109"/>
    </location>
    <ligand>
        <name>[4Fe-4S] cluster</name>
        <dbReference type="ChEBI" id="CHEBI:49883"/>
        <note>4Fe-4S-S-AdoMet</note>
    </ligand>
</feature>
<feature type="binding site" evidence="1">
    <location>
        <position position="113"/>
    </location>
    <ligand>
        <name>[4Fe-4S] cluster</name>
        <dbReference type="ChEBI" id="CHEBI:49883"/>
        <note>4Fe-4S-S-AdoMet</note>
    </ligand>
</feature>
<feature type="binding site" evidence="1">
    <location>
        <position position="116"/>
    </location>
    <ligand>
        <name>[4Fe-4S] cluster</name>
        <dbReference type="ChEBI" id="CHEBI:49883"/>
        <note>4Fe-4S-S-AdoMet</note>
    </ligand>
</feature>
<feature type="binding site" evidence="1">
    <location>
        <begin position="159"/>
        <end position="160"/>
    </location>
    <ligand>
        <name>S-adenosyl-L-methionine</name>
        <dbReference type="ChEBI" id="CHEBI:59789"/>
    </ligand>
</feature>
<feature type="binding site" evidence="1">
    <location>
        <position position="191"/>
    </location>
    <ligand>
        <name>S-adenosyl-L-methionine</name>
        <dbReference type="ChEBI" id="CHEBI:59789"/>
    </ligand>
</feature>
<feature type="binding site" evidence="1">
    <location>
        <begin position="214"/>
        <end position="216"/>
    </location>
    <ligand>
        <name>S-adenosyl-L-methionine</name>
        <dbReference type="ChEBI" id="CHEBI:59789"/>
    </ligand>
</feature>
<feature type="binding site" evidence="1">
    <location>
        <position position="290"/>
    </location>
    <ligand>
        <name>S-adenosyl-L-methionine</name>
        <dbReference type="ChEBI" id="CHEBI:59789"/>
    </ligand>
</feature>
<feature type="disulfide bond" description="(transient)" evidence="1">
    <location>
        <begin position="102"/>
        <end position="333"/>
    </location>
</feature>
<sequence length="355" mass="39246">MAASHALKPILELLPEELPGEGYRRAQIAHWLYAKGARDFSEMTDLPKALREALAREWRLSEFSLVQAFPSQDGSVKYLFTLLDGKKTEAVYMPYENRKTVCLSTMVGCPAGCTFCATGALGFGRNLTAAEILDQLLTIAYHQGLSPREIRNVVLMGMGEPLLNLRNVLKAVRIMLHKKALALSPRRVTLSTVGIPKGIYRLAEEDLGVRLALSLHAPDDETRRKIIPTAHRYPIAEIMEAVRHYHAKTKRRVTFEYTLLKGVNDHLWQARLLAKLLKGLSAHVNLIPFNPWEGAPVAGTPKAGVLAFAEELKRLGVPTSIRWSRGQDVGAACGQLALKVPRPLTLTPLPEGAGR</sequence>
<evidence type="ECO:0000255" key="1">
    <source>
        <dbReference type="HAMAP-Rule" id="MF_01849"/>
    </source>
</evidence>
<evidence type="ECO:0000255" key="2">
    <source>
        <dbReference type="PROSITE-ProRule" id="PRU01266"/>
    </source>
</evidence>
<dbReference type="EC" id="2.1.1.192" evidence="1"/>
<dbReference type="EMBL" id="AE017221">
    <property type="protein sequence ID" value="AAS81916.1"/>
    <property type="molecule type" value="Genomic_DNA"/>
</dbReference>
<dbReference type="RefSeq" id="WP_011173946.1">
    <property type="nucleotide sequence ID" value="NC_005835.1"/>
</dbReference>
<dbReference type="SMR" id="Q72HC1"/>
<dbReference type="KEGG" id="tth:TT_C1574"/>
<dbReference type="eggNOG" id="COG0820">
    <property type="taxonomic scope" value="Bacteria"/>
</dbReference>
<dbReference type="HOGENOM" id="CLU_029101_0_2_0"/>
<dbReference type="OrthoDB" id="9793973at2"/>
<dbReference type="Proteomes" id="UP000000592">
    <property type="component" value="Chromosome"/>
</dbReference>
<dbReference type="GO" id="GO:0005737">
    <property type="term" value="C:cytoplasm"/>
    <property type="evidence" value="ECO:0007669"/>
    <property type="project" value="UniProtKB-SubCell"/>
</dbReference>
<dbReference type="GO" id="GO:0051539">
    <property type="term" value="F:4 iron, 4 sulfur cluster binding"/>
    <property type="evidence" value="ECO:0007669"/>
    <property type="project" value="UniProtKB-UniRule"/>
</dbReference>
<dbReference type="GO" id="GO:0046872">
    <property type="term" value="F:metal ion binding"/>
    <property type="evidence" value="ECO:0007669"/>
    <property type="project" value="UniProtKB-KW"/>
</dbReference>
<dbReference type="GO" id="GO:0070040">
    <property type="term" value="F:rRNA (adenine(2503)-C2-)-methyltransferase activity"/>
    <property type="evidence" value="ECO:0007669"/>
    <property type="project" value="UniProtKB-UniRule"/>
</dbReference>
<dbReference type="GO" id="GO:0019843">
    <property type="term" value="F:rRNA binding"/>
    <property type="evidence" value="ECO:0007669"/>
    <property type="project" value="UniProtKB-UniRule"/>
</dbReference>
<dbReference type="GO" id="GO:0002935">
    <property type="term" value="F:tRNA (adenine(37)-C2)-methyltransferase activity"/>
    <property type="evidence" value="ECO:0007669"/>
    <property type="project" value="UniProtKB-UniRule"/>
</dbReference>
<dbReference type="GO" id="GO:0000049">
    <property type="term" value="F:tRNA binding"/>
    <property type="evidence" value="ECO:0007669"/>
    <property type="project" value="UniProtKB-UniRule"/>
</dbReference>
<dbReference type="GO" id="GO:0070475">
    <property type="term" value="P:rRNA base methylation"/>
    <property type="evidence" value="ECO:0007669"/>
    <property type="project" value="UniProtKB-UniRule"/>
</dbReference>
<dbReference type="GO" id="GO:0030488">
    <property type="term" value="P:tRNA methylation"/>
    <property type="evidence" value="ECO:0007669"/>
    <property type="project" value="UniProtKB-UniRule"/>
</dbReference>
<dbReference type="CDD" id="cd01335">
    <property type="entry name" value="Radical_SAM"/>
    <property type="match status" value="1"/>
</dbReference>
<dbReference type="FunFam" id="3.20.20.70:FF:000014">
    <property type="entry name" value="Probable dual-specificity RNA methyltransferase RlmN"/>
    <property type="match status" value="1"/>
</dbReference>
<dbReference type="Gene3D" id="1.10.150.530">
    <property type="match status" value="1"/>
</dbReference>
<dbReference type="Gene3D" id="3.20.20.70">
    <property type="entry name" value="Aldolase class I"/>
    <property type="match status" value="1"/>
</dbReference>
<dbReference type="HAMAP" id="MF_01849">
    <property type="entry name" value="RNA_methyltr_RlmN"/>
    <property type="match status" value="1"/>
</dbReference>
<dbReference type="InterPro" id="IPR013785">
    <property type="entry name" value="Aldolase_TIM"/>
</dbReference>
<dbReference type="InterPro" id="IPR006638">
    <property type="entry name" value="Elp3/MiaA/NifB-like_rSAM"/>
</dbReference>
<dbReference type="InterPro" id="IPR040072">
    <property type="entry name" value="Methyltransferase_A"/>
</dbReference>
<dbReference type="InterPro" id="IPR048641">
    <property type="entry name" value="RlmN_N"/>
</dbReference>
<dbReference type="InterPro" id="IPR027492">
    <property type="entry name" value="RNA_MTrfase_RlmN"/>
</dbReference>
<dbReference type="InterPro" id="IPR004383">
    <property type="entry name" value="rRNA_lsu_MTrfase_RlmN/Cfr"/>
</dbReference>
<dbReference type="InterPro" id="IPR007197">
    <property type="entry name" value="rSAM"/>
</dbReference>
<dbReference type="NCBIfam" id="TIGR00048">
    <property type="entry name" value="rRNA_mod_RlmN"/>
    <property type="match status" value="1"/>
</dbReference>
<dbReference type="PANTHER" id="PTHR30544">
    <property type="entry name" value="23S RRNA METHYLTRANSFERASE"/>
    <property type="match status" value="1"/>
</dbReference>
<dbReference type="PANTHER" id="PTHR30544:SF5">
    <property type="entry name" value="RADICAL SAM CORE DOMAIN-CONTAINING PROTEIN"/>
    <property type="match status" value="1"/>
</dbReference>
<dbReference type="Pfam" id="PF04055">
    <property type="entry name" value="Radical_SAM"/>
    <property type="match status" value="1"/>
</dbReference>
<dbReference type="Pfam" id="PF21016">
    <property type="entry name" value="RlmN_N"/>
    <property type="match status" value="1"/>
</dbReference>
<dbReference type="PIRSF" id="PIRSF006004">
    <property type="entry name" value="CHP00048"/>
    <property type="match status" value="1"/>
</dbReference>
<dbReference type="SFLD" id="SFLDF00275">
    <property type="entry name" value="adenosine_C2_methyltransferase"/>
    <property type="match status" value="1"/>
</dbReference>
<dbReference type="SFLD" id="SFLDS00029">
    <property type="entry name" value="Radical_SAM"/>
    <property type="match status" value="1"/>
</dbReference>
<dbReference type="SMART" id="SM00729">
    <property type="entry name" value="Elp3"/>
    <property type="match status" value="1"/>
</dbReference>
<dbReference type="SUPFAM" id="SSF102114">
    <property type="entry name" value="Radical SAM enzymes"/>
    <property type="match status" value="1"/>
</dbReference>
<dbReference type="PROSITE" id="PS51918">
    <property type="entry name" value="RADICAL_SAM"/>
    <property type="match status" value="1"/>
</dbReference>
<organism>
    <name type="scientific">Thermus thermophilus (strain ATCC BAA-163 / DSM 7039 / HB27)</name>
    <dbReference type="NCBI Taxonomy" id="262724"/>
    <lineage>
        <taxon>Bacteria</taxon>
        <taxon>Thermotogati</taxon>
        <taxon>Deinococcota</taxon>
        <taxon>Deinococci</taxon>
        <taxon>Thermales</taxon>
        <taxon>Thermaceae</taxon>
        <taxon>Thermus</taxon>
    </lineage>
</organism>
<name>RLMN_THET2</name>
<proteinExistence type="inferred from homology"/>
<keyword id="KW-0004">4Fe-4S</keyword>
<keyword id="KW-0963">Cytoplasm</keyword>
<keyword id="KW-1015">Disulfide bond</keyword>
<keyword id="KW-0408">Iron</keyword>
<keyword id="KW-0411">Iron-sulfur</keyword>
<keyword id="KW-0479">Metal-binding</keyword>
<keyword id="KW-0489">Methyltransferase</keyword>
<keyword id="KW-0698">rRNA processing</keyword>
<keyword id="KW-0949">S-adenosyl-L-methionine</keyword>
<keyword id="KW-0808">Transferase</keyword>
<keyword id="KW-0819">tRNA processing</keyword>
<reference key="1">
    <citation type="journal article" date="2004" name="Nat. Biotechnol.">
        <title>The genome sequence of the extreme thermophile Thermus thermophilus.</title>
        <authorList>
            <person name="Henne A."/>
            <person name="Brueggemann H."/>
            <person name="Raasch C."/>
            <person name="Wiezer A."/>
            <person name="Hartsch T."/>
            <person name="Liesegang H."/>
            <person name="Johann A."/>
            <person name="Lienard T."/>
            <person name="Gohl O."/>
            <person name="Martinez-Arias R."/>
            <person name="Jacobi C."/>
            <person name="Starkuviene V."/>
            <person name="Schlenczeck S."/>
            <person name="Dencker S."/>
            <person name="Huber R."/>
            <person name="Klenk H.-P."/>
            <person name="Kramer W."/>
            <person name="Merkl R."/>
            <person name="Gottschalk G."/>
            <person name="Fritz H.-J."/>
        </authorList>
    </citation>
    <scope>NUCLEOTIDE SEQUENCE [LARGE SCALE GENOMIC DNA]</scope>
    <source>
        <strain>ATCC BAA-163 / DSM 7039 / HB27</strain>
    </source>
</reference>